<name>GTE6_ARATH</name>
<proteinExistence type="evidence at transcript level"/>
<feature type="chain" id="PRO_0000211204" description="Transcription factor GTE6">
    <location>
        <begin position="1"/>
        <end position="369"/>
    </location>
</feature>
<feature type="domain" description="Bromo" evidence="2">
    <location>
        <begin position="89"/>
        <end position="198"/>
    </location>
</feature>
<feature type="domain" description="NET" evidence="3">
    <location>
        <begin position="250"/>
        <end position="331"/>
    </location>
</feature>
<feature type="region of interest" description="Disordered" evidence="4">
    <location>
        <begin position="329"/>
        <end position="369"/>
    </location>
</feature>
<feature type="coiled-coil region" evidence="1">
    <location>
        <begin position="201"/>
        <end position="263"/>
    </location>
</feature>
<feature type="short sequence motif" description="Bipartite nuclear localization signal" evidence="1">
    <location>
        <begin position="351"/>
        <end position="368"/>
    </location>
</feature>
<feature type="compositionally biased region" description="Basic and acidic residues" evidence="4">
    <location>
        <begin position="329"/>
        <end position="348"/>
    </location>
</feature>
<comment type="function">
    <text evidence="5">Regulates differences in leaf patterning between juvenile and mature leaves by controlling differences in the development of primordia produced during juvenile and mature phases. Acts by activating transcription of the myb-domain protein AS1, a gene involved in leaf-axis specification. Associates with the promoter and the start of the transcribed region of AS1 and up-regulates expression of AS1 through acetylation of histones H3 and H4.</text>
</comment>
<comment type="subcellular location">
    <subcellularLocation>
        <location evidence="5">Nucleus</location>
    </subcellularLocation>
</comment>
<comment type="alternative products">
    <event type="alternative splicing"/>
    <isoform>
        <id>Q9FT54-1</id>
        <name>1</name>
        <sequence type="displayed"/>
    </isoform>
    <text>A number of isoforms are produced. According to EST sequences.</text>
</comment>
<comment type="tissue specificity">
    <text evidence="5">Abundantly expressed in flowers. Weakly expressed in roots, leaves and siliques; and undetectable in 5-day-old seedlings. In the basal rosette leaves of 21-day-old plants, it is more abundant in leaves 6 and 7, which possess narrow elliptical laminae, than in leaves 1-4, which have round laminae, suggesting a possible correlation between its expression and the formation of elliptical leaf laminae in mature leaves.</text>
</comment>
<comment type="domain">
    <text>The NET domain could serve as an interface to localize different proteins or complexes to chromatin.</text>
</comment>
<comment type="disruption phenotype">
    <text evidence="5">Disrupted formation of elliptical leaf laminae in mature leaves.</text>
</comment>
<reference key="1">
    <citation type="journal article" date="2000" name="Nature">
        <title>Sequence and analysis of chromosome 3 of the plant Arabidopsis thaliana.</title>
        <authorList>
            <person name="Salanoubat M."/>
            <person name="Lemcke K."/>
            <person name="Rieger M."/>
            <person name="Ansorge W."/>
            <person name="Unseld M."/>
            <person name="Fartmann B."/>
            <person name="Valle G."/>
            <person name="Bloecker H."/>
            <person name="Perez-Alonso M."/>
            <person name="Obermaier B."/>
            <person name="Delseny M."/>
            <person name="Boutry M."/>
            <person name="Grivell L.A."/>
            <person name="Mache R."/>
            <person name="Puigdomenech P."/>
            <person name="De Simone V."/>
            <person name="Choisne N."/>
            <person name="Artiguenave F."/>
            <person name="Robert C."/>
            <person name="Brottier P."/>
            <person name="Wincker P."/>
            <person name="Cattolico L."/>
            <person name="Weissenbach J."/>
            <person name="Saurin W."/>
            <person name="Quetier F."/>
            <person name="Schaefer M."/>
            <person name="Mueller-Auer S."/>
            <person name="Gabel C."/>
            <person name="Fuchs M."/>
            <person name="Benes V."/>
            <person name="Wurmbach E."/>
            <person name="Drzonek H."/>
            <person name="Erfle H."/>
            <person name="Jordan N."/>
            <person name="Bangert S."/>
            <person name="Wiedelmann R."/>
            <person name="Kranz H."/>
            <person name="Voss H."/>
            <person name="Holland R."/>
            <person name="Brandt P."/>
            <person name="Nyakatura G."/>
            <person name="Vezzi A."/>
            <person name="D'Angelo M."/>
            <person name="Pallavicini A."/>
            <person name="Toppo S."/>
            <person name="Simionati B."/>
            <person name="Conrad A."/>
            <person name="Hornischer K."/>
            <person name="Kauer G."/>
            <person name="Loehnert T.-H."/>
            <person name="Nordsiek G."/>
            <person name="Reichelt J."/>
            <person name="Scharfe M."/>
            <person name="Schoen O."/>
            <person name="Bargues M."/>
            <person name="Terol J."/>
            <person name="Climent J."/>
            <person name="Navarro P."/>
            <person name="Collado C."/>
            <person name="Perez-Perez A."/>
            <person name="Ottenwaelder B."/>
            <person name="Duchemin D."/>
            <person name="Cooke R."/>
            <person name="Laudie M."/>
            <person name="Berger-Llauro C."/>
            <person name="Purnelle B."/>
            <person name="Masuy D."/>
            <person name="de Haan M."/>
            <person name="Maarse A.C."/>
            <person name="Alcaraz J.-P."/>
            <person name="Cottet A."/>
            <person name="Casacuberta E."/>
            <person name="Monfort A."/>
            <person name="Argiriou A."/>
            <person name="Flores M."/>
            <person name="Liguori R."/>
            <person name="Vitale D."/>
            <person name="Mannhaupt G."/>
            <person name="Haase D."/>
            <person name="Schoof H."/>
            <person name="Rudd S."/>
            <person name="Zaccaria P."/>
            <person name="Mewes H.-W."/>
            <person name="Mayer K.F.X."/>
            <person name="Kaul S."/>
            <person name="Town C.D."/>
            <person name="Koo H.L."/>
            <person name="Tallon L.J."/>
            <person name="Jenkins J."/>
            <person name="Rooney T."/>
            <person name="Rizzo M."/>
            <person name="Walts A."/>
            <person name="Utterback T."/>
            <person name="Fujii C.Y."/>
            <person name="Shea T.P."/>
            <person name="Creasy T.H."/>
            <person name="Haas B."/>
            <person name="Maiti R."/>
            <person name="Wu D."/>
            <person name="Peterson J."/>
            <person name="Van Aken S."/>
            <person name="Pai G."/>
            <person name="Militscher J."/>
            <person name="Sellers P."/>
            <person name="Gill J.E."/>
            <person name="Feldblyum T.V."/>
            <person name="Preuss D."/>
            <person name="Lin X."/>
            <person name="Nierman W.C."/>
            <person name="Salzberg S.L."/>
            <person name="White O."/>
            <person name="Venter J.C."/>
            <person name="Fraser C.M."/>
            <person name="Kaneko T."/>
            <person name="Nakamura Y."/>
            <person name="Sato S."/>
            <person name="Kato T."/>
            <person name="Asamizu E."/>
            <person name="Sasamoto S."/>
            <person name="Kimura T."/>
            <person name="Idesawa K."/>
            <person name="Kawashima K."/>
            <person name="Kishida Y."/>
            <person name="Kiyokawa C."/>
            <person name="Kohara M."/>
            <person name="Matsumoto M."/>
            <person name="Matsuno A."/>
            <person name="Muraki A."/>
            <person name="Nakayama S."/>
            <person name="Nakazaki N."/>
            <person name="Shinpo S."/>
            <person name="Takeuchi C."/>
            <person name="Wada T."/>
            <person name="Watanabe A."/>
            <person name="Yamada M."/>
            <person name="Yasuda M."/>
            <person name="Tabata S."/>
        </authorList>
    </citation>
    <scope>NUCLEOTIDE SEQUENCE [LARGE SCALE GENOMIC DNA]</scope>
    <source>
        <strain>cv. Columbia</strain>
    </source>
</reference>
<reference key="2">
    <citation type="journal article" date="2017" name="Plant J.">
        <title>Araport11: a complete reannotation of the Arabidopsis thaliana reference genome.</title>
        <authorList>
            <person name="Cheng C.Y."/>
            <person name="Krishnakumar V."/>
            <person name="Chan A.P."/>
            <person name="Thibaud-Nissen F."/>
            <person name="Schobel S."/>
            <person name="Town C.D."/>
        </authorList>
    </citation>
    <scope>GENOME REANNOTATION</scope>
    <source>
        <strain>cv. Columbia</strain>
    </source>
</reference>
<reference key="3">
    <citation type="journal article" date="2002" name="Nucleic Acids Res.">
        <title>Analysis of histone acetyltransferase and histone deacetylase families of Arabidopsis thaliana suggests functional diversification of chromatin modification among multicellular eukaryotes.</title>
        <authorList>
            <person name="Pandey R."/>
            <person name="Mueller A."/>
            <person name="Napoli C.A."/>
            <person name="Selinger D.A."/>
            <person name="Pikaard C.S."/>
            <person name="Richards E.J."/>
            <person name="Bender J."/>
            <person name="Mount D.W."/>
            <person name="Jorgensen R.A."/>
        </authorList>
    </citation>
    <scope>GENE FAMILY</scope>
    <scope>NOMENCLATURE</scope>
</reference>
<reference key="4">
    <citation type="journal article" date="2005" name="Genes Dev.">
        <title>The bromodomain protein GTE6 controls leaf development in Arabidopsis by histone acetylation at ASYMMETRIC LEAVES1.</title>
        <authorList>
            <person name="Chua Y.L."/>
            <person name="Channeliere S."/>
            <person name="Mott E."/>
            <person name="Gray J.C."/>
        </authorList>
    </citation>
    <scope>FUNCTION</scope>
    <scope>DISRUPTION PHENOTYPE</scope>
    <scope>SUBCELLULAR LOCATION</scope>
    <scope>TISSUE SPECIFICITY</scope>
</reference>
<keyword id="KW-0010">Activator</keyword>
<keyword id="KW-0025">Alternative splicing</keyword>
<keyword id="KW-0103">Bromodomain</keyword>
<keyword id="KW-0156">Chromatin regulator</keyword>
<keyword id="KW-0175">Coiled coil</keyword>
<keyword id="KW-0217">Developmental protein</keyword>
<keyword id="KW-0539">Nucleus</keyword>
<keyword id="KW-1185">Reference proteome</keyword>
<keyword id="KW-0804">Transcription</keyword>
<keyword id="KW-0805">Transcription regulation</keyword>
<gene>
    <name type="primary">GTE6</name>
    <name type="ordered locus">At3g52280</name>
    <name type="ORF">T25B15.50</name>
</gene>
<sequence>MADSVPGHVAGGGLQGFSVDAECIKQRVDEVLQWVDSLEHKLKEVEEFYSSIGVSNSGSIGKDTEKGRHVVGIRKIQQEAARREAVAAKRMQDLMRQFGTIFRQITQHKCAWPFMHPVNVEGLGLHDYFEVIDKPMDFSTIKNQMEAKDGTGYKHVMQIYADMRLVFENAMNYNEETSDVYSMAKKLLEKFEEKWAHFLPKVQEEEKIREEEEKQAAKEALLAKEASHIKTTRELGNEICHANDELEKLMRKVVERCRKITIEEKRNIGLALLKLSPDDLQKVLGIVAQANPSFQPRAEEVSIEMDILDEPTLWRLKFFVKDALDNAMKKKKEEETKTRELSGAQKKEVSKKRNATTKLAERKTKRSRI</sequence>
<protein>
    <recommendedName>
        <fullName>Transcription factor GTE6</fullName>
    </recommendedName>
    <alternativeName>
        <fullName>Bromodomain-containing protein GTE6</fullName>
    </alternativeName>
    <alternativeName>
        <fullName>Protein GENERAL TRANSCRIPTION FACTOR GROUP E6</fullName>
    </alternativeName>
    <alternativeName>
        <fullName>Protein GLOBAL TRANSCRIPTION FACTOR GROUP E6</fullName>
    </alternativeName>
</protein>
<accession>Q9FT54</accession>
<evidence type="ECO:0000255" key="1"/>
<evidence type="ECO:0000255" key="2">
    <source>
        <dbReference type="PROSITE-ProRule" id="PRU00035"/>
    </source>
</evidence>
<evidence type="ECO:0000255" key="3">
    <source>
        <dbReference type="PROSITE-ProRule" id="PRU00857"/>
    </source>
</evidence>
<evidence type="ECO:0000256" key="4">
    <source>
        <dbReference type="SAM" id="MobiDB-lite"/>
    </source>
</evidence>
<evidence type="ECO:0000269" key="5">
    <source>
    </source>
</evidence>
<organism>
    <name type="scientific">Arabidopsis thaliana</name>
    <name type="common">Mouse-ear cress</name>
    <dbReference type="NCBI Taxonomy" id="3702"/>
    <lineage>
        <taxon>Eukaryota</taxon>
        <taxon>Viridiplantae</taxon>
        <taxon>Streptophyta</taxon>
        <taxon>Embryophyta</taxon>
        <taxon>Tracheophyta</taxon>
        <taxon>Spermatophyta</taxon>
        <taxon>Magnoliopsida</taxon>
        <taxon>eudicotyledons</taxon>
        <taxon>Gunneridae</taxon>
        <taxon>Pentapetalae</taxon>
        <taxon>rosids</taxon>
        <taxon>malvids</taxon>
        <taxon>Brassicales</taxon>
        <taxon>Brassicaceae</taxon>
        <taxon>Camelineae</taxon>
        <taxon>Arabidopsis</taxon>
    </lineage>
</organism>
<dbReference type="EMBL" id="AL132972">
    <property type="protein sequence ID" value="CAC07919.1"/>
    <property type="molecule type" value="Genomic_DNA"/>
</dbReference>
<dbReference type="EMBL" id="CP002686">
    <property type="protein sequence ID" value="AEE78925.1"/>
    <property type="molecule type" value="Genomic_DNA"/>
</dbReference>
<dbReference type="PIR" id="T46098">
    <property type="entry name" value="T46098"/>
</dbReference>
<dbReference type="RefSeq" id="NP_190796.1">
    <molecule id="Q9FT54-1"/>
    <property type="nucleotide sequence ID" value="NM_115088.2"/>
</dbReference>
<dbReference type="SMR" id="Q9FT54"/>
<dbReference type="FunCoup" id="Q9FT54">
    <property type="interactions" value="933"/>
</dbReference>
<dbReference type="STRING" id="3702.Q9FT54"/>
<dbReference type="PaxDb" id="3702-AT3G52280.2"/>
<dbReference type="ProteomicsDB" id="247231">
    <molecule id="Q9FT54-1"/>
</dbReference>
<dbReference type="EnsemblPlants" id="AT3G52280.1">
    <molecule id="Q9FT54-1"/>
    <property type="protein sequence ID" value="AT3G52280.1"/>
    <property type="gene ID" value="AT3G52280"/>
</dbReference>
<dbReference type="GeneID" id="824393"/>
<dbReference type="Gramene" id="AT3G52280.1">
    <molecule id="Q9FT54-1"/>
    <property type="protein sequence ID" value="AT3G52280.1"/>
    <property type="gene ID" value="AT3G52280"/>
</dbReference>
<dbReference type="KEGG" id="ath:AT3G52280"/>
<dbReference type="Araport" id="AT3G52280"/>
<dbReference type="TAIR" id="AT3G52280">
    <property type="gene designation" value="GTE6"/>
</dbReference>
<dbReference type="eggNOG" id="KOG1474">
    <property type="taxonomic scope" value="Eukaryota"/>
</dbReference>
<dbReference type="HOGENOM" id="CLU_063149_0_0_1"/>
<dbReference type="InParanoid" id="Q9FT54"/>
<dbReference type="OMA" id="MKYNEEA"/>
<dbReference type="OrthoDB" id="21449at2759"/>
<dbReference type="PhylomeDB" id="Q9FT54"/>
<dbReference type="PRO" id="PR:Q9FT54"/>
<dbReference type="Proteomes" id="UP000006548">
    <property type="component" value="Chromosome 3"/>
</dbReference>
<dbReference type="ExpressionAtlas" id="Q9FT54">
    <property type="expression patterns" value="baseline and differential"/>
</dbReference>
<dbReference type="GO" id="GO:0005634">
    <property type="term" value="C:nucleus"/>
    <property type="evidence" value="ECO:0007669"/>
    <property type="project" value="UniProtKB-SubCell"/>
</dbReference>
<dbReference type="GO" id="GO:0006325">
    <property type="term" value="P:chromatin organization"/>
    <property type="evidence" value="ECO:0007669"/>
    <property type="project" value="UniProtKB-KW"/>
</dbReference>
<dbReference type="GO" id="GO:0006355">
    <property type="term" value="P:regulation of DNA-templated transcription"/>
    <property type="evidence" value="ECO:0007669"/>
    <property type="project" value="InterPro"/>
</dbReference>
<dbReference type="FunFam" id="1.20.920.10:FF:000093">
    <property type="entry name" value="Transcription factor GTE6"/>
    <property type="match status" value="1"/>
</dbReference>
<dbReference type="Gene3D" id="1.20.1270.220">
    <property type="match status" value="1"/>
</dbReference>
<dbReference type="Gene3D" id="1.20.920.10">
    <property type="entry name" value="Bromodomain-like"/>
    <property type="match status" value="1"/>
</dbReference>
<dbReference type="InterPro" id="IPR001487">
    <property type="entry name" value="Bromodomain"/>
</dbReference>
<dbReference type="InterPro" id="IPR036427">
    <property type="entry name" value="Bromodomain-like_sf"/>
</dbReference>
<dbReference type="InterPro" id="IPR017413">
    <property type="entry name" value="GTE1"/>
</dbReference>
<dbReference type="InterPro" id="IPR027353">
    <property type="entry name" value="NET_dom"/>
</dbReference>
<dbReference type="InterPro" id="IPR038336">
    <property type="entry name" value="NET_sf"/>
</dbReference>
<dbReference type="PANTHER" id="PTHR45926">
    <property type="entry name" value="OSJNBA0053K19.4 PROTEIN"/>
    <property type="match status" value="1"/>
</dbReference>
<dbReference type="Pfam" id="PF17035">
    <property type="entry name" value="BET"/>
    <property type="match status" value="1"/>
</dbReference>
<dbReference type="Pfam" id="PF00439">
    <property type="entry name" value="Bromodomain"/>
    <property type="match status" value="1"/>
</dbReference>
<dbReference type="PIRSF" id="PIRSF038154">
    <property type="entry name" value="Transcription_factor_GTE6"/>
    <property type="match status" value="1"/>
</dbReference>
<dbReference type="PRINTS" id="PR00503">
    <property type="entry name" value="BROMODOMAIN"/>
</dbReference>
<dbReference type="SMART" id="SM00297">
    <property type="entry name" value="BROMO"/>
    <property type="match status" value="1"/>
</dbReference>
<dbReference type="SUPFAM" id="SSF47370">
    <property type="entry name" value="Bromodomain"/>
    <property type="match status" value="1"/>
</dbReference>
<dbReference type="PROSITE" id="PS50014">
    <property type="entry name" value="BROMODOMAIN_2"/>
    <property type="match status" value="1"/>
</dbReference>
<dbReference type="PROSITE" id="PS51525">
    <property type="entry name" value="NET"/>
    <property type="match status" value="1"/>
</dbReference>